<proteinExistence type="evidence at transcript level"/>
<protein>
    <recommendedName>
        <fullName>CASP-like protein 2C2</fullName>
        <shortName>OsCASPL2C2</shortName>
    </recommendedName>
</protein>
<keyword id="KW-1003">Cell membrane</keyword>
<keyword id="KW-0472">Membrane</keyword>
<keyword id="KW-1185">Reference proteome</keyword>
<keyword id="KW-0812">Transmembrane</keyword>
<keyword id="KW-1133">Transmembrane helix</keyword>
<accession>Q6ETN2</accession>
<accession>A0A0P0VFF0</accession>
<gene>
    <name type="ordered locus">Os02g0177700</name>
    <name type="ordered locus">LOC_Os02g08110</name>
    <name type="ORF">P0504A05.25</name>
</gene>
<reference key="1">
    <citation type="journal article" date="2005" name="Nature">
        <title>The map-based sequence of the rice genome.</title>
        <authorList>
            <consortium name="International rice genome sequencing project (IRGSP)"/>
        </authorList>
    </citation>
    <scope>NUCLEOTIDE SEQUENCE [LARGE SCALE GENOMIC DNA]</scope>
    <source>
        <strain>cv. Nipponbare</strain>
    </source>
</reference>
<reference key="2">
    <citation type="journal article" date="2008" name="Nucleic Acids Res.">
        <title>The rice annotation project database (RAP-DB): 2008 update.</title>
        <authorList>
            <consortium name="The rice annotation project (RAP)"/>
        </authorList>
    </citation>
    <scope>GENOME REANNOTATION</scope>
    <source>
        <strain>cv. Nipponbare</strain>
    </source>
</reference>
<reference key="3">
    <citation type="journal article" date="2013" name="Rice">
        <title>Improvement of the Oryza sativa Nipponbare reference genome using next generation sequence and optical map data.</title>
        <authorList>
            <person name="Kawahara Y."/>
            <person name="de la Bastide M."/>
            <person name="Hamilton J.P."/>
            <person name="Kanamori H."/>
            <person name="McCombie W.R."/>
            <person name="Ouyang S."/>
            <person name="Schwartz D.C."/>
            <person name="Tanaka T."/>
            <person name="Wu J."/>
            <person name="Zhou S."/>
            <person name="Childs K.L."/>
            <person name="Davidson R.M."/>
            <person name="Lin H."/>
            <person name="Quesada-Ocampo L."/>
            <person name="Vaillancourt B."/>
            <person name="Sakai H."/>
            <person name="Lee S.S."/>
            <person name="Kim J."/>
            <person name="Numa H."/>
            <person name="Itoh T."/>
            <person name="Buell C.R."/>
            <person name="Matsumoto T."/>
        </authorList>
    </citation>
    <scope>GENOME REANNOTATION</scope>
    <source>
        <strain>cv. Nipponbare</strain>
    </source>
</reference>
<reference key="4">
    <citation type="journal article" date="2003" name="Science">
        <title>Collection, mapping, and annotation of over 28,000 cDNA clones from japonica rice.</title>
        <authorList>
            <consortium name="The rice full-length cDNA consortium"/>
        </authorList>
    </citation>
    <scope>NUCLEOTIDE SEQUENCE [LARGE SCALE MRNA]</scope>
    <source>
        <strain>cv. Nipponbare</strain>
    </source>
</reference>
<reference key="5">
    <citation type="journal article" date="2014" name="Plant Physiol.">
        <title>Functional and evolutionary analysis of the CASPARIAN STRIP MEMBRANE DOMAIN PROTEIN family.</title>
        <authorList>
            <person name="Roppolo D."/>
            <person name="Boeckmann B."/>
            <person name="Pfister A."/>
            <person name="Boutet E."/>
            <person name="Rubio M.C."/>
            <person name="Denervaud-Tendon V."/>
            <person name="Vermeer J.E."/>
            <person name="Gheyselinck J."/>
            <person name="Xenarios I."/>
            <person name="Geldner N."/>
        </authorList>
    </citation>
    <scope>GENE FAMILY</scope>
    <scope>NOMENCLATURE</scope>
</reference>
<organism>
    <name type="scientific">Oryza sativa subsp. japonica</name>
    <name type="common">Rice</name>
    <dbReference type="NCBI Taxonomy" id="39947"/>
    <lineage>
        <taxon>Eukaryota</taxon>
        <taxon>Viridiplantae</taxon>
        <taxon>Streptophyta</taxon>
        <taxon>Embryophyta</taxon>
        <taxon>Tracheophyta</taxon>
        <taxon>Spermatophyta</taxon>
        <taxon>Magnoliopsida</taxon>
        <taxon>Liliopsida</taxon>
        <taxon>Poales</taxon>
        <taxon>Poaceae</taxon>
        <taxon>BOP clade</taxon>
        <taxon>Oryzoideae</taxon>
        <taxon>Oryzeae</taxon>
        <taxon>Oryzinae</taxon>
        <taxon>Oryza</taxon>
        <taxon>Oryza sativa</taxon>
    </lineage>
</organism>
<feature type="chain" id="PRO_0000391599" description="CASP-like protein 2C2">
    <location>
        <begin position="1"/>
        <end position="195"/>
    </location>
</feature>
<feature type="topological domain" description="Cytoplasmic" evidence="2">
    <location>
        <begin position="1"/>
        <end position="18"/>
    </location>
</feature>
<feature type="transmembrane region" description="Helical" evidence="2">
    <location>
        <begin position="19"/>
        <end position="39"/>
    </location>
</feature>
<feature type="topological domain" description="Extracellular" evidence="2">
    <location>
        <begin position="40"/>
        <end position="57"/>
    </location>
</feature>
<feature type="transmembrane region" description="Helical" evidence="2">
    <location>
        <begin position="58"/>
        <end position="78"/>
    </location>
</feature>
<feature type="topological domain" description="Cytoplasmic" evidence="2">
    <location>
        <begin position="79"/>
        <end position="106"/>
    </location>
</feature>
<feature type="transmembrane region" description="Helical" evidence="2">
    <location>
        <begin position="107"/>
        <end position="127"/>
    </location>
</feature>
<feature type="topological domain" description="Extracellular" evidence="2">
    <location>
        <begin position="128"/>
        <end position="145"/>
    </location>
</feature>
<feature type="transmembrane region" description="Helical" evidence="2">
    <location>
        <begin position="146"/>
        <end position="166"/>
    </location>
</feature>
<feature type="topological domain" description="Cytoplasmic" evidence="2">
    <location>
        <begin position="167"/>
        <end position="195"/>
    </location>
</feature>
<comment type="subunit">
    <text evidence="1">Homodimer and heterodimers.</text>
</comment>
<comment type="subcellular location">
    <subcellularLocation>
        <location evidence="1">Cell membrane</location>
        <topology evidence="1">Multi-pass membrane protein</topology>
    </subcellularLocation>
</comment>
<comment type="similarity">
    <text evidence="3">Belongs to the Casparian strip membrane proteins (CASP) family.</text>
</comment>
<dbReference type="EMBL" id="AP004838">
    <property type="protein sequence ID" value="BAD27988.1"/>
    <property type="molecule type" value="Genomic_DNA"/>
</dbReference>
<dbReference type="EMBL" id="AP008208">
    <property type="protein sequence ID" value="BAF07984.1"/>
    <property type="molecule type" value="Genomic_DNA"/>
</dbReference>
<dbReference type="EMBL" id="AP014958">
    <property type="protein sequence ID" value="BAS77270.1"/>
    <property type="molecule type" value="Genomic_DNA"/>
</dbReference>
<dbReference type="EMBL" id="AK119941">
    <property type="protein sequence ID" value="BAG99819.1"/>
    <property type="molecule type" value="mRNA"/>
</dbReference>
<dbReference type="RefSeq" id="XP_015625717.1">
    <property type="nucleotide sequence ID" value="XM_015770231.1"/>
</dbReference>
<dbReference type="SMR" id="Q6ETN2"/>
<dbReference type="FunCoup" id="Q6ETN2">
    <property type="interactions" value="431"/>
</dbReference>
<dbReference type="PaxDb" id="39947-Q6ETN2"/>
<dbReference type="EnsemblPlants" id="Os02t0177700-01">
    <property type="protein sequence ID" value="Os02t0177700-01"/>
    <property type="gene ID" value="Os02g0177700"/>
</dbReference>
<dbReference type="Gramene" id="Os02t0177700-01">
    <property type="protein sequence ID" value="Os02t0177700-01"/>
    <property type="gene ID" value="Os02g0177700"/>
</dbReference>
<dbReference type="KEGG" id="dosa:Os02g0177700"/>
<dbReference type="eggNOG" id="ENOG502S20T">
    <property type="taxonomic scope" value="Eukaryota"/>
</dbReference>
<dbReference type="HOGENOM" id="CLU_066104_0_0_1"/>
<dbReference type="InParanoid" id="Q6ETN2"/>
<dbReference type="OMA" id="WMKICNR"/>
<dbReference type="OrthoDB" id="689315at2759"/>
<dbReference type="Proteomes" id="UP000000763">
    <property type="component" value="Chromosome 2"/>
</dbReference>
<dbReference type="Proteomes" id="UP000059680">
    <property type="component" value="Chromosome 2"/>
</dbReference>
<dbReference type="GO" id="GO:0005886">
    <property type="term" value="C:plasma membrane"/>
    <property type="evidence" value="ECO:0007669"/>
    <property type="project" value="UniProtKB-SubCell"/>
</dbReference>
<dbReference type="InterPro" id="IPR006459">
    <property type="entry name" value="CASP/CASPL"/>
</dbReference>
<dbReference type="InterPro" id="IPR006702">
    <property type="entry name" value="CASP_dom"/>
</dbReference>
<dbReference type="NCBIfam" id="TIGR01569">
    <property type="entry name" value="A_tha_TIGR01569"/>
    <property type="match status" value="1"/>
</dbReference>
<dbReference type="PANTHER" id="PTHR33573:SF30">
    <property type="entry name" value="CASP-LIKE PROTEIN 2C1-RELATED"/>
    <property type="match status" value="1"/>
</dbReference>
<dbReference type="PANTHER" id="PTHR33573">
    <property type="entry name" value="CASP-LIKE PROTEIN 4A4"/>
    <property type="match status" value="1"/>
</dbReference>
<dbReference type="Pfam" id="PF04535">
    <property type="entry name" value="CASP_dom"/>
    <property type="match status" value="1"/>
</dbReference>
<evidence type="ECO:0000250" key="1"/>
<evidence type="ECO:0000255" key="2"/>
<evidence type="ECO:0000305" key="3"/>
<sequence length="195" mass="20228">MAATTAAAAVPGVVRAERLLRGGCVVMAATAALLLGFSAETKTVLFVRKTAVAKDVQALWVLTVAAAAAAGYQFAQLVRCMYCSSSGDAGAMAVAWTSFLLDKGCAYVVFASTAAALQACMVGLIGVEALQWSKLCNIYTRFCEQAAAGMLCSFLAAAGMAVLSAFSARRLFRLYSPAGHRRSCPRAAVLATSPH</sequence>
<name>CSPLM_ORYSJ</name>